<gene>
    <name type="primary">SNE</name>
    <name type="synonym">SLY2</name>
    <name type="ordered locus">At5g48170</name>
    <name type="ORF">MIF21.6</name>
</gene>
<accession>Q9LUB6</accession>
<sequence>MSSEKRVGMVEKSNNKRQRVNQVPVFSINDHHDVLVEILRRLDGSSLCSAACVCRLWSAVARNDSIWEELCFRQVSPRPSLSLRSVVSALGGYRCLYFLCIRPVLARLPKLLWTRDQLQLSLSLYCVHYYERLYVGAWLGDAPPSSLIFLRKPVNVV</sequence>
<name>SNE_ARATH</name>
<feature type="chain" id="PRO_0000119964" description="F-box protein SNE">
    <location>
        <begin position="1"/>
        <end position="157"/>
    </location>
</feature>
<feature type="domain" description="F-box">
    <location>
        <begin position="24"/>
        <end position="70"/>
    </location>
</feature>
<evidence type="ECO:0000250" key="1"/>
<evidence type="ECO:0000269" key="2">
    <source>
    </source>
</evidence>
<evidence type="ECO:0000269" key="3">
    <source>
    </source>
</evidence>
<comment type="function">
    <text evidence="2 3">Essential component of a SCF-type E3 ligase complex that positively regulates the gibberellin signaling pathway. Upon gibberellin treatment, such complex probably mediates the ubiquitination and subsequent degradation of DELLA proteins (GAI, RGA and RGL2), some repressors of the gibberellin pathway, leading to activate the pathway. Can partially complement the absence of GID2/SLY1.</text>
</comment>
<comment type="pathway">
    <text>Protein modification; protein ubiquitination.</text>
</comment>
<comment type="subunit">
    <text evidence="2">Part of a SCF (ASK-cullin-F-box) protein ligase complex. Interacts directly with SKP1A and SKP1B.</text>
</comment>
<comment type="subcellular location">
    <subcellularLocation>
        <location evidence="1">Nucleus</location>
    </subcellularLocation>
</comment>
<comment type="tissue specificity">
    <text evidence="3">Highly expressed in flowers and at much lower level in seedlings, rosette leaves and green siliques.</text>
</comment>
<proteinExistence type="evidence at protein level"/>
<dbReference type="EMBL" id="AB023039">
    <property type="protein sequence ID" value="BAA96997.1"/>
    <property type="molecule type" value="Genomic_DNA"/>
</dbReference>
<dbReference type="EMBL" id="CP002688">
    <property type="protein sequence ID" value="AED95628.1"/>
    <property type="molecule type" value="Genomic_DNA"/>
</dbReference>
<dbReference type="EMBL" id="BT011771">
    <property type="protein sequence ID" value="AAS65942.1"/>
    <property type="molecule type" value="mRNA"/>
</dbReference>
<dbReference type="EMBL" id="BT012391">
    <property type="protein sequence ID" value="AAS88781.1"/>
    <property type="molecule type" value="mRNA"/>
</dbReference>
<dbReference type="RefSeq" id="NP_199628.1">
    <property type="nucleotide sequence ID" value="NM_124191.4"/>
</dbReference>
<dbReference type="BioGRID" id="20116">
    <property type="interactions" value="6"/>
</dbReference>
<dbReference type="FunCoup" id="Q9LUB6">
    <property type="interactions" value="24"/>
</dbReference>
<dbReference type="IntAct" id="Q9LUB6">
    <property type="interactions" value="6"/>
</dbReference>
<dbReference type="STRING" id="3702.Q9LUB6"/>
<dbReference type="PaxDb" id="3702-AT5G48170.1"/>
<dbReference type="DNASU" id="834869"/>
<dbReference type="EnsemblPlants" id="AT5G48170.1">
    <property type="protein sequence ID" value="AT5G48170.1"/>
    <property type="gene ID" value="AT5G48170"/>
</dbReference>
<dbReference type="GeneID" id="834869"/>
<dbReference type="Gramene" id="AT5G48170.1">
    <property type="protein sequence ID" value="AT5G48170.1"/>
    <property type="gene ID" value="AT5G48170"/>
</dbReference>
<dbReference type="KEGG" id="ath:AT5G48170"/>
<dbReference type="Araport" id="AT5G48170"/>
<dbReference type="TAIR" id="AT5G48170">
    <property type="gene designation" value="SLY2"/>
</dbReference>
<dbReference type="eggNOG" id="ENOG502S07N">
    <property type="taxonomic scope" value="Eukaryota"/>
</dbReference>
<dbReference type="HOGENOM" id="CLU_111348_1_0_1"/>
<dbReference type="InParanoid" id="Q9LUB6"/>
<dbReference type="OMA" id="FLCNTIN"/>
<dbReference type="OrthoDB" id="2095648at2759"/>
<dbReference type="PhylomeDB" id="Q9LUB6"/>
<dbReference type="UniPathway" id="UPA00143"/>
<dbReference type="PRO" id="PR:Q9LUB6"/>
<dbReference type="Proteomes" id="UP000006548">
    <property type="component" value="Chromosome 5"/>
</dbReference>
<dbReference type="ExpressionAtlas" id="Q9LUB6">
    <property type="expression patterns" value="baseline and differential"/>
</dbReference>
<dbReference type="GO" id="GO:0005634">
    <property type="term" value="C:nucleus"/>
    <property type="evidence" value="ECO:0007669"/>
    <property type="project" value="UniProtKB-SubCell"/>
</dbReference>
<dbReference type="GO" id="GO:0019005">
    <property type="term" value="C:SCF ubiquitin ligase complex"/>
    <property type="evidence" value="ECO:0000353"/>
    <property type="project" value="TAIR"/>
</dbReference>
<dbReference type="GO" id="GO:0009740">
    <property type="term" value="P:gibberellic acid mediated signaling pathway"/>
    <property type="evidence" value="ECO:0000315"/>
    <property type="project" value="TAIR"/>
</dbReference>
<dbReference type="GO" id="GO:0016567">
    <property type="term" value="P:protein ubiquitination"/>
    <property type="evidence" value="ECO:0007669"/>
    <property type="project" value="UniProtKB-UniPathway"/>
</dbReference>
<dbReference type="GO" id="GO:0009937">
    <property type="term" value="P:regulation of gibberellic acid mediated signaling pathway"/>
    <property type="evidence" value="ECO:0000315"/>
    <property type="project" value="TAIR"/>
</dbReference>
<dbReference type="GO" id="GO:0048831">
    <property type="term" value="P:regulation of shoot system development"/>
    <property type="evidence" value="ECO:0000316"/>
    <property type="project" value="TAIR"/>
</dbReference>
<dbReference type="CDD" id="cd22151">
    <property type="entry name" value="F-box_AtGID2-like"/>
    <property type="match status" value="1"/>
</dbReference>
<dbReference type="FunFam" id="1.20.1280.50:FF:000066">
    <property type="entry name" value="F-box protein SNE"/>
    <property type="match status" value="1"/>
</dbReference>
<dbReference type="Gene3D" id="1.20.1280.50">
    <property type="match status" value="1"/>
</dbReference>
<dbReference type="InterPro" id="IPR036047">
    <property type="entry name" value="F-box-like_dom_sf"/>
</dbReference>
<dbReference type="InterPro" id="IPR001810">
    <property type="entry name" value="F-box_dom"/>
</dbReference>
<dbReference type="InterPro" id="IPR044184">
    <property type="entry name" value="SNE/GID2"/>
</dbReference>
<dbReference type="PANTHER" id="PTHR47750">
    <property type="entry name" value="F-BOX PROTEIN SNE"/>
    <property type="match status" value="1"/>
</dbReference>
<dbReference type="PANTHER" id="PTHR47750:SF1">
    <property type="entry name" value="F-BOX PROTEIN SNE"/>
    <property type="match status" value="1"/>
</dbReference>
<dbReference type="Pfam" id="PF12937">
    <property type="entry name" value="F-box-like"/>
    <property type="match status" value="1"/>
</dbReference>
<dbReference type="SMART" id="SM00256">
    <property type="entry name" value="FBOX"/>
    <property type="match status" value="1"/>
</dbReference>
<dbReference type="SUPFAM" id="SSF81383">
    <property type="entry name" value="F-box domain"/>
    <property type="match status" value="1"/>
</dbReference>
<keyword id="KW-0939">Gibberellin signaling pathway</keyword>
<keyword id="KW-0539">Nucleus</keyword>
<keyword id="KW-1185">Reference proteome</keyword>
<keyword id="KW-0833">Ubl conjugation pathway</keyword>
<protein>
    <recommendedName>
        <fullName>F-box protein SNE</fullName>
    </recommendedName>
    <alternativeName>
        <fullName>Protein SNEEZY</fullName>
    </alternativeName>
    <alternativeName>
        <fullName>Sleepy protein 2</fullName>
    </alternativeName>
</protein>
<reference key="1">
    <citation type="journal article" date="2000" name="DNA Res.">
        <title>Structural analysis of Arabidopsis thaliana chromosome 5. X. Sequence features of the regions of 3,076,755 bp covered by sixty P1 and TAC clones.</title>
        <authorList>
            <person name="Sato S."/>
            <person name="Nakamura Y."/>
            <person name="Kaneko T."/>
            <person name="Katoh T."/>
            <person name="Asamizu E."/>
            <person name="Kotani H."/>
            <person name="Tabata S."/>
        </authorList>
    </citation>
    <scope>NUCLEOTIDE SEQUENCE [LARGE SCALE GENOMIC DNA]</scope>
    <source>
        <strain>cv. Columbia</strain>
    </source>
</reference>
<reference key="2">
    <citation type="journal article" date="2017" name="Plant J.">
        <title>Araport11: a complete reannotation of the Arabidopsis thaliana reference genome.</title>
        <authorList>
            <person name="Cheng C.Y."/>
            <person name="Krishnakumar V."/>
            <person name="Chan A.P."/>
            <person name="Thibaud-Nissen F."/>
            <person name="Schobel S."/>
            <person name="Town C.D."/>
        </authorList>
    </citation>
    <scope>GENOME REANNOTATION</scope>
    <source>
        <strain>cv. Columbia</strain>
    </source>
</reference>
<reference key="3">
    <citation type="submission" date="2004-04" db="EMBL/GenBank/DDBJ databases">
        <title>Arabidopsis cDNA clones.</title>
        <authorList>
            <person name="Shinn P."/>
            <person name="Chen H."/>
            <person name="Cheuk R.F."/>
            <person name="Kim C.J."/>
            <person name="Ecker J.R."/>
        </authorList>
    </citation>
    <scope>NUCLEOTIDE SEQUENCE [LARGE SCALE MRNA]</scope>
</reference>
<reference key="4">
    <citation type="journal article" date="2004" name="Plant Cell">
        <title>The Arabidopsis mutant sleepy1gar2-1 protein promotes plant growth by increasing the affinity of the SCFSLY1 E3 ubiquitin ligase for DELLA protein substrates.</title>
        <authorList>
            <person name="Fu X."/>
            <person name="Richards D.E."/>
            <person name="Fleck B."/>
            <person name="Xie D."/>
            <person name="Burton N."/>
            <person name="Harberd N.P."/>
        </authorList>
    </citation>
    <scope>FUNCTION</scope>
    <scope>INTERACTION WITH SKP1A AND SKP1B</scope>
</reference>
<reference key="5">
    <citation type="journal article" date="2004" name="Proc. Natl. Acad. Sci. U.S.A.">
        <title>Recessive-interfering mutations in the gibberellin signaling gene SLEEPY1 are rescued by overexpression of its homologue, SNEEZY.</title>
        <authorList>
            <person name="Strader L.C."/>
            <person name="Ritchie S."/>
            <person name="Soule J.D."/>
            <person name="McGinnis K.M."/>
            <person name="Steber C.M."/>
        </authorList>
    </citation>
    <scope>FUNCTION</scope>
    <scope>TISSUE SPECIFICITY</scope>
</reference>
<organism>
    <name type="scientific">Arabidopsis thaliana</name>
    <name type="common">Mouse-ear cress</name>
    <dbReference type="NCBI Taxonomy" id="3702"/>
    <lineage>
        <taxon>Eukaryota</taxon>
        <taxon>Viridiplantae</taxon>
        <taxon>Streptophyta</taxon>
        <taxon>Embryophyta</taxon>
        <taxon>Tracheophyta</taxon>
        <taxon>Spermatophyta</taxon>
        <taxon>Magnoliopsida</taxon>
        <taxon>eudicotyledons</taxon>
        <taxon>Gunneridae</taxon>
        <taxon>Pentapetalae</taxon>
        <taxon>rosids</taxon>
        <taxon>malvids</taxon>
        <taxon>Brassicales</taxon>
        <taxon>Brassicaceae</taxon>
        <taxon>Camelineae</taxon>
        <taxon>Arabidopsis</taxon>
    </lineage>
</organism>